<name>EF2_AERPE</name>
<proteinExistence type="inferred from homology"/>
<comment type="function">
    <text evidence="1">Catalyzes the GTP-dependent ribosomal translocation step during translation elongation. During this step, the ribosome changes from the pre-translocational (PRE) to the post-translocational (POST) state as the newly formed A-site-bound peptidyl-tRNA and P-site-bound deacylated tRNA move to the P and E sites, respectively. Catalyzes the coordinated movement of the two tRNA molecules, the mRNA and conformational changes in the ribosome (By similarity).</text>
</comment>
<comment type="subcellular location">
    <subcellularLocation>
        <location evidence="1">Cytoplasm</location>
    </subcellularLocation>
</comment>
<comment type="similarity">
    <text evidence="2">Belongs to the TRAFAC class translation factor GTPase superfamily. Classic translation factor GTPase family. EF-G/EF-2 subfamily.</text>
</comment>
<keyword id="KW-0963">Cytoplasm</keyword>
<keyword id="KW-0251">Elongation factor</keyword>
<keyword id="KW-0342">GTP-binding</keyword>
<keyword id="KW-0547">Nucleotide-binding</keyword>
<keyword id="KW-0648">Protein biosynthesis</keyword>
<keyword id="KW-1185">Reference proteome</keyword>
<gene>
    <name type="primary">fusA</name>
    <name type="synonym">fus</name>
    <name type="ordered locus">APE_1432</name>
</gene>
<feature type="chain" id="PRO_0000091025" description="Elongation factor 2">
    <location>
        <begin position="1"/>
        <end position="736"/>
    </location>
</feature>
<feature type="domain" description="tr-type G">
    <location>
        <begin position="19"/>
        <end position="262"/>
    </location>
</feature>
<feature type="binding site" evidence="1">
    <location>
        <begin position="28"/>
        <end position="35"/>
    </location>
    <ligand>
        <name>GTP</name>
        <dbReference type="ChEBI" id="CHEBI:37565"/>
    </ligand>
</feature>
<feature type="binding site" evidence="1">
    <location>
        <begin position="94"/>
        <end position="98"/>
    </location>
    <ligand>
        <name>GTP</name>
        <dbReference type="ChEBI" id="CHEBI:37565"/>
    </ligand>
</feature>
<feature type="binding site" evidence="1">
    <location>
        <begin position="148"/>
        <end position="151"/>
    </location>
    <ligand>
        <name>GTP</name>
        <dbReference type="ChEBI" id="CHEBI:37565"/>
    </ligand>
</feature>
<feature type="modified residue" description="Diphthamide" evidence="1">
    <location>
        <position position="602"/>
    </location>
</feature>
<protein>
    <recommendedName>
        <fullName>Elongation factor 2</fullName>
        <shortName>EF-2</shortName>
    </recommendedName>
</protein>
<sequence>MGARVKVVSEIEKIMRNIDQIRNIGIIAHVDHGKTTTSDSLLAAAGIISERIAGEALVLDYLNVEKQRGITVKSANVSLYHEYEGKPYVINLIDTPGHVDFSGKVTRSLRVLDGAIVVVDAVEGVMTQTETVIRQALEERVRPILFINKVDRLIKELKLPPEKIQQRFVEIIKEVNNLIDLYAEPEFRKKWKLDPNAGMVAFGSAKDKWGISVPQVKKKGITFREIIQAYEKGKEAVAELSKKMPLHETLLDMVIKFVPNPREAQRYRIPKIWKGDINSEIGQAMLNADPDGPLVFFINDVRIEKAGLVATGRVFSGTLRSGEEVYLLNAGKKSRLLQVSIYMGPFREVTKEIPAGNIGAVMGFEDVRAGETVVSLGYEENAAPFESLRYVSEPVVTIAVEPVKIQDLPKMIEALRKLTIEDPNLVVKINEETGEYLLSGMGPLHLEIALTMLREKFGVEVKASPPIVVYRETVRQQSRVFEGKSPNKHNKLYISVEPLNEETITLIQNGAVTEDQDPKDRARILADKAGWDYNEARKIWAIDENINVFVDKTAGVQYLREVKDTIIAGFRLALKEGPLAAEPVRGVKVVLHDAVIHEDPVHRGPGQLYPAVRNAIWAGILDGRPTLLEPLQKLDIRAPMEYLSNITAVLTRKRGRIINVETTGVMARIIAAIPVAESFDLAGELRSATAGRAFWGVEFYGWAPVPDQMLQDLIAKIRQRKGLPPSPPKIDDLIGP</sequence>
<reference key="1">
    <citation type="journal article" date="1999" name="DNA Res.">
        <title>Complete genome sequence of an aerobic hyper-thermophilic crenarchaeon, Aeropyrum pernix K1.</title>
        <authorList>
            <person name="Kawarabayasi Y."/>
            <person name="Hino Y."/>
            <person name="Horikawa H."/>
            <person name="Yamazaki S."/>
            <person name="Haikawa Y."/>
            <person name="Jin-no K."/>
            <person name="Takahashi M."/>
            <person name="Sekine M."/>
            <person name="Baba S."/>
            <person name="Ankai A."/>
            <person name="Kosugi H."/>
            <person name="Hosoyama A."/>
            <person name="Fukui S."/>
            <person name="Nagai Y."/>
            <person name="Nishijima K."/>
            <person name="Nakazawa H."/>
            <person name="Takamiya M."/>
            <person name="Masuda S."/>
            <person name="Funahashi T."/>
            <person name="Tanaka T."/>
            <person name="Kudoh Y."/>
            <person name="Yamazaki J."/>
            <person name="Kushida N."/>
            <person name="Oguchi A."/>
            <person name="Aoki K."/>
            <person name="Kubota K."/>
            <person name="Nakamura Y."/>
            <person name="Nomura N."/>
            <person name="Sako Y."/>
            <person name="Kikuchi H."/>
        </authorList>
    </citation>
    <scope>NUCLEOTIDE SEQUENCE [LARGE SCALE GENOMIC DNA]</scope>
    <source>
        <strain>ATCC 700893 / DSM 11879 / JCM 9820 / NBRC 100138 / K1</strain>
    </source>
</reference>
<evidence type="ECO:0000250" key="1"/>
<evidence type="ECO:0000305" key="2"/>
<dbReference type="EMBL" id="BA000002">
    <property type="protein sequence ID" value="BAA80429.1"/>
    <property type="molecule type" value="Genomic_DNA"/>
</dbReference>
<dbReference type="PIR" id="G72621">
    <property type="entry name" value="G72621"/>
</dbReference>
<dbReference type="RefSeq" id="WP_010866365.1">
    <property type="nucleotide sequence ID" value="NC_000854.2"/>
</dbReference>
<dbReference type="SMR" id="Q9YC19"/>
<dbReference type="STRING" id="272557.APE_1432"/>
<dbReference type="EnsemblBacteria" id="BAA80429">
    <property type="protein sequence ID" value="BAA80429"/>
    <property type="gene ID" value="APE_1432"/>
</dbReference>
<dbReference type="GeneID" id="1446012"/>
<dbReference type="KEGG" id="ape:APE_1432"/>
<dbReference type="PATRIC" id="fig|272557.25.peg.967"/>
<dbReference type="eggNOG" id="arCOG01559">
    <property type="taxonomic scope" value="Archaea"/>
</dbReference>
<dbReference type="Proteomes" id="UP000002518">
    <property type="component" value="Chromosome"/>
</dbReference>
<dbReference type="GO" id="GO:0005829">
    <property type="term" value="C:cytosol"/>
    <property type="evidence" value="ECO:0007669"/>
    <property type="project" value="TreeGrafter"/>
</dbReference>
<dbReference type="GO" id="GO:1990904">
    <property type="term" value="C:ribonucleoprotein complex"/>
    <property type="evidence" value="ECO:0007669"/>
    <property type="project" value="TreeGrafter"/>
</dbReference>
<dbReference type="GO" id="GO:0005525">
    <property type="term" value="F:GTP binding"/>
    <property type="evidence" value="ECO:0007669"/>
    <property type="project" value="UniProtKB-UniRule"/>
</dbReference>
<dbReference type="GO" id="GO:0003924">
    <property type="term" value="F:GTPase activity"/>
    <property type="evidence" value="ECO:0007669"/>
    <property type="project" value="InterPro"/>
</dbReference>
<dbReference type="GO" id="GO:0003746">
    <property type="term" value="F:translation elongation factor activity"/>
    <property type="evidence" value="ECO:0007669"/>
    <property type="project" value="UniProtKB-UniRule"/>
</dbReference>
<dbReference type="CDD" id="cd01681">
    <property type="entry name" value="aeEF2_snRNP_like_IV"/>
    <property type="match status" value="1"/>
</dbReference>
<dbReference type="CDD" id="cd01885">
    <property type="entry name" value="EF2"/>
    <property type="match status" value="1"/>
</dbReference>
<dbReference type="CDD" id="cd16268">
    <property type="entry name" value="EF2_II"/>
    <property type="match status" value="1"/>
</dbReference>
<dbReference type="CDD" id="cd16261">
    <property type="entry name" value="EF2_snRNP_III"/>
    <property type="match status" value="1"/>
</dbReference>
<dbReference type="CDD" id="cd01514">
    <property type="entry name" value="Elongation_Factor_C"/>
    <property type="match status" value="1"/>
</dbReference>
<dbReference type="FunFam" id="3.30.230.10:FF:000009">
    <property type="entry name" value="116 kDa U5 small nuclear ribonucleoprotein component"/>
    <property type="match status" value="1"/>
</dbReference>
<dbReference type="FunFam" id="3.40.50.300:FF:000684">
    <property type="entry name" value="Elongation factor 2"/>
    <property type="match status" value="1"/>
</dbReference>
<dbReference type="FunFam" id="3.30.70.870:FF:000002">
    <property type="entry name" value="Translation elongation factor 2"/>
    <property type="match status" value="1"/>
</dbReference>
<dbReference type="Gene3D" id="3.30.230.10">
    <property type="match status" value="1"/>
</dbReference>
<dbReference type="Gene3D" id="3.30.70.240">
    <property type="match status" value="1"/>
</dbReference>
<dbReference type="Gene3D" id="3.30.70.870">
    <property type="entry name" value="Elongation Factor G (Translational Gtpase), domain 3"/>
    <property type="match status" value="1"/>
</dbReference>
<dbReference type="Gene3D" id="3.40.50.300">
    <property type="entry name" value="P-loop containing nucleotide triphosphate hydrolases"/>
    <property type="match status" value="1"/>
</dbReference>
<dbReference type="Gene3D" id="2.40.30.10">
    <property type="entry name" value="Translation factors"/>
    <property type="match status" value="1"/>
</dbReference>
<dbReference type="HAMAP" id="MF_00054_A">
    <property type="entry name" value="EF_G_EF_2_A"/>
    <property type="match status" value="1"/>
</dbReference>
<dbReference type="InterPro" id="IPR041095">
    <property type="entry name" value="EFG_II"/>
</dbReference>
<dbReference type="InterPro" id="IPR035647">
    <property type="entry name" value="EFG_III/V"/>
</dbReference>
<dbReference type="InterPro" id="IPR000640">
    <property type="entry name" value="EFG_V-like"/>
</dbReference>
<dbReference type="InterPro" id="IPR004161">
    <property type="entry name" value="EFTu-like_2"/>
</dbReference>
<dbReference type="InterPro" id="IPR031157">
    <property type="entry name" value="G_TR_CS"/>
</dbReference>
<dbReference type="InterPro" id="IPR027417">
    <property type="entry name" value="P-loop_NTPase"/>
</dbReference>
<dbReference type="InterPro" id="IPR020568">
    <property type="entry name" value="Ribosomal_Su5_D2-typ_SF"/>
</dbReference>
<dbReference type="InterPro" id="IPR014721">
    <property type="entry name" value="Ribsml_uS5_D2-typ_fold_subgr"/>
</dbReference>
<dbReference type="InterPro" id="IPR005225">
    <property type="entry name" value="Small_GTP-bd"/>
</dbReference>
<dbReference type="InterPro" id="IPR000795">
    <property type="entry name" value="T_Tr_GTP-bd_dom"/>
</dbReference>
<dbReference type="InterPro" id="IPR009000">
    <property type="entry name" value="Transl_B-barrel_sf"/>
</dbReference>
<dbReference type="InterPro" id="IPR004543">
    <property type="entry name" value="Transl_elong_EFG/EF2_arc"/>
</dbReference>
<dbReference type="InterPro" id="IPR005517">
    <property type="entry name" value="Transl_elong_EFG/EF2_IV"/>
</dbReference>
<dbReference type="NCBIfam" id="TIGR00490">
    <property type="entry name" value="aEF-2"/>
    <property type="match status" value="1"/>
</dbReference>
<dbReference type="NCBIfam" id="TIGR00231">
    <property type="entry name" value="small_GTP"/>
    <property type="match status" value="1"/>
</dbReference>
<dbReference type="PANTHER" id="PTHR42908:SF3">
    <property type="entry name" value="ELONGATION FACTOR-LIKE GTPASE 1"/>
    <property type="match status" value="1"/>
</dbReference>
<dbReference type="PANTHER" id="PTHR42908">
    <property type="entry name" value="TRANSLATION ELONGATION FACTOR-RELATED"/>
    <property type="match status" value="1"/>
</dbReference>
<dbReference type="Pfam" id="PF00679">
    <property type="entry name" value="EFG_C"/>
    <property type="match status" value="1"/>
</dbReference>
<dbReference type="Pfam" id="PF14492">
    <property type="entry name" value="EFG_III"/>
    <property type="match status" value="1"/>
</dbReference>
<dbReference type="Pfam" id="PF03764">
    <property type="entry name" value="EFG_IV"/>
    <property type="match status" value="1"/>
</dbReference>
<dbReference type="Pfam" id="PF00009">
    <property type="entry name" value="GTP_EFTU"/>
    <property type="match status" value="1"/>
</dbReference>
<dbReference type="Pfam" id="PF03144">
    <property type="entry name" value="GTP_EFTU_D2"/>
    <property type="match status" value="1"/>
</dbReference>
<dbReference type="PRINTS" id="PR00315">
    <property type="entry name" value="ELONGATNFCT"/>
</dbReference>
<dbReference type="SMART" id="SM00838">
    <property type="entry name" value="EFG_C"/>
    <property type="match status" value="1"/>
</dbReference>
<dbReference type="SMART" id="SM00889">
    <property type="entry name" value="EFG_IV"/>
    <property type="match status" value="1"/>
</dbReference>
<dbReference type="SUPFAM" id="SSF54980">
    <property type="entry name" value="EF-G C-terminal domain-like"/>
    <property type="match status" value="2"/>
</dbReference>
<dbReference type="SUPFAM" id="SSF52540">
    <property type="entry name" value="P-loop containing nucleoside triphosphate hydrolases"/>
    <property type="match status" value="1"/>
</dbReference>
<dbReference type="SUPFAM" id="SSF54211">
    <property type="entry name" value="Ribosomal protein S5 domain 2-like"/>
    <property type="match status" value="1"/>
</dbReference>
<dbReference type="SUPFAM" id="SSF50447">
    <property type="entry name" value="Translation proteins"/>
    <property type="match status" value="1"/>
</dbReference>
<dbReference type="PROSITE" id="PS00301">
    <property type="entry name" value="G_TR_1"/>
    <property type="match status" value="1"/>
</dbReference>
<dbReference type="PROSITE" id="PS51722">
    <property type="entry name" value="G_TR_2"/>
    <property type="match status" value="1"/>
</dbReference>
<accession>Q9YC19</accession>
<organism>
    <name type="scientific">Aeropyrum pernix (strain ATCC 700893 / DSM 11879 / JCM 9820 / NBRC 100138 / K1)</name>
    <dbReference type="NCBI Taxonomy" id="272557"/>
    <lineage>
        <taxon>Archaea</taxon>
        <taxon>Thermoproteota</taxon>
        <taxon>Thermoprotei</taxon>
        <taxon>Desulfurococcales</taxon>
        <taxon>Desulfurococcaceae</taxon>
        <taxon>Aeropyrum</taxon>
    </lineage>
</organism>